<proteinExistence type="inferred from homology"/>
<evidence type="ECO:0000255" key="1">
    <source>
        <dbReference type="HAMAP-Rule" id="MF_00129"/>
    </source>
</evidence>
<accession>Q73GE7</accession>
<comment type="function">
    <text evidence="1">NAD-binding protein involved in the addition of a carboxymethylaminomethyl (cmnm) group at the wobble position (U34) of certain tRNAs, forming tRNA-cmnm(5)s(2)U34.</text>
</comment>
<comment type="cofactor">
    <cofactor evidence="1">
        <name>FAD</name>
        <dbReference type="ChEBI" id="CHEBI:57692"/>
    </cofactor>
</comment>
<comment type="subunit">
    <text evidence="1">Homodimer. Heterotetramer of two MnmE and two MnmG subunits.</text>
</comment>
<comment type="subcellular location">
    <subcellularLocation>
        <location evidence="1">Cytoplasm</location>
    </subcellularLocation>
</comment>
<comment type="similarity">
    <text evidence="1">Belongs to the MnmG family.</text>
</comment>
<protein>
    <recommendedName>
        <fullName evidence="1">tRNA uridine 5-carboxymethylaminomethyl modification enzyme MnmG</fullName>
    </recommendedName>
    <alternativeName>
        <fullName evidence="1">Glucose-inhibited division protein A</fullName>
    </alternativeName>
</protein>
<sequence length="644" mass="71527">MHKYDVVVVGGGHAGCEAAAAAARLGANTLLITHKISTIGEMSCNPAIGGVAKGVVVREVDALDGIMGRAIDQASIHSVILNSSRGAAVWGPRAQADRKLYKQAIQEIILNYNNLTVKEESVDDFLIESNNNGELCIKAVITSSGEHILTSKVVLTTGTFLRGVIHIGEQVTPSGRMGDKPAVELANTLKKYNFKLGRLRTGTPPRLDRGTINWSILQEQVGDNPPVPFSYLTEKINQPQVSCFITHTNENTHKIIRENLHRSASSYLDDIIAPRYCPSIEVKVNKFAEKSSHQIFLEPEGLDDDTVYPNGISNSLPIEVQREMIKSIKGLENAEILRPGYAVEYDYIDPRELFHTLETKKIKGLYFAGQINGTTGYEEAAGQGIIAGINAALSASEKKESFVLHRTDSYIGVMIDDLVIKGVIEPYRLFTSRAEYRLAIRSDNADRRLTQKGYDISLVSHERYSVLQNKLESIKQLEEKLGSLTITPEQLRSYGIKISYDGIRKTALDLLSYPNIDWNKLQEIWPELSSVTRWNGKMGHTKADNRAKNEICEAVEIEAKYKPYLIRQEADMKFLREEINTQIPINFNYSQVKGLSSEVIEKLQTIKPATIGIAKQIQGITPAAIVSILVYLRNRKTKVAASFA</sequence>
<keyword id="KW-0963">Cytoplasm</keyword>
<keyword id="KW-0274">FAD</keyword>
<keyword id="KW-0285">Flavoprotein</keyword>
<keyword id="KW-0520">NAD</keyword>
<keyword id="KW-0819">tRNA processing</keyword>
<gene>
    <name evidence="1" type="primary">mnmG</name>
    <name evidence="1" type="synonym">gidA</name>
    <name type="ordered locus">WD_1009</name>
</gene>
<organism>
    <name type="scientific">Wolbachia pipientis wMel</name>
    <dbReference type="NCBI Taxonomy" id="163164"/>
    <lineage>
        <taxon>Bacteria</taxon>
        <taxon>Pseudomonadati</taxon>
        <taxon>Pseudomonadota</taxon>
        <taxon>Alphaproteobacteria</taxon>
        <taxon>Rickettsiales</taxon>
        <taxon>Anaplasmataceae</taxon>
        <taxon>Wolbachieae</taxon>
        <taxon>Wolbachia</taxon>
    </lineage>
</organism>
<feature type="chain" id="PRO_0000117214" description="tRNA uridine 5-carboxymethylaminomethyl modification enzyme MnmG">
    <location>
        <begin position="1"/>
        <end position="644"/>
    </location>
</feature>
<feature type="binding site" evidence="1">
    <location>
        <begin position="10"/>
        <end position="15"/>
    </location>
    <ligand>
        <name>FAD</name>
        <dbReference type="ChEBI" id="CHEBI:57692"/>
    </ligand>
</feature>
<feature type="binding site" evidence="1">
    <location>
        <begin position="273"/>
        <end position="287"/>
    </location>
    <ligand>
        <name>NAD(+)</name>
        <dbReference type="ChEBI" id="CHEBI:57540"/>
    </ligand>
</feature>
<name>MNMG_WOLPM</name>
<dbReference type="EMBL" id="AE017196">
    <property type="protein sequence ID" value="AAS14669.1"/>
    <property type="molecule type" value="Genomic_DNA"/>
</dbReference>
<dbReference type="RefSeq" id="WP_010962983.1">
    <property type="nucleotide sequence ID" value="NZ_OX384529.1"/>
</dbReference>
<dbReference type="SMR" id="Q73GE7"/>
<dbReference type="EnsemblBacteria" id="AAS14669">
    <property type="protein sequence ID" value="AAS14669"/>
    <property type="gene ID" value="WD_1009"/>
</dbReference>
<dbReference type="GeneID" id="70036487"/>
<dbReference type="KEGG" id="wol:WD_1009"/>
<dbReference type="eggNOG" id="COG0445">
    <property type="taxonomic scope" value="Bacteria"/>
</dbReference>
<dbReference type="Proteomes" id="UP000008215">
    <property type="component" value="Chromosome"/>
</dbReference>
<dbReference type="GO" id="GO:0005829">
    <property type="term" value="C:cytosol"/>
    <property type="evidence" value="ECO:0007669"/>
    <property type="project" value="TreeGrafter"/>
</dbReference>
<dbReference type="GO" id="GO:0050660">
    <property type="term" value="F:flavin adenine dinucleotide binding"/>
    <property type="evidence" value="ECO:0007669"/>
    <property type="project" value="UniProtKB-UniRule"/>
</dbReference>
<dbReference type="GO" id="GO:0030488">
    <property type="term" value="P:tRNA methylation"/>
    <property type="evidence" value="ECO:0007669"/>
    <property type="project" value="TreeGrafter"/>
</dbReference>
<dbReference type="GO" id="GO:0002098">
    <property type="term" value="P:tRNA wobble uridine modification"/>
    <property type="evidence" value="ECO:0007669"/>
    <property type="project" value="InterPro"/>
</dbReference>
<dbReference type="FunFam" id="3.50.50.60:FF:000082">
    <property type="entry name" value="protein MTO1 homolog, mitochondrial isoform X1"/>
    <property type="match status" value="1"/>
</dbReference>
<dbReference type="FunFam" id="1.10.150.570:FF:000001">
    <property type="entry name" value="tRNA uridine 5-carboxymethylaminomethyl modification enzyme MnmG"/>
    <property type="match status" value="1"/>
</dbReference>
<dbReference type="FunFam" id="3.50.50.60:FF:000002">
    <property type="entry name" value="tRNA uridine 5-carboxymethylaminomethyl modification enzyme MnmG"/>
    <property type="match status" value="1"/>
</dbReference>
<dbReference type="Gene3D" id="3.50.50.60">
    <property type="entry name" value="FAD/NAD(P)-binding domain"/>
    <property type="match status" value="2"/>
</dbReference>
<dbReference type="Gene3D" id="1.10.150.570">
    <property type="entry name" value="GidA associated domain, C-terminal subdomain"/>
    <property type="match status" value="1"/>
</dbReference>
<dbReference type="Gene3D" id="1.10.10.1800">
    <property type="entry name" value="tRNA uridine 5-carboxymethylaminomethyl modification enzyme MnmG/GidA"/>
    <property type="match status" value="1"/>
</dbReference>
<dbReference type="HAMAP" id="MF_00129">
    <property type="entry name" value="MnmG_GidA"/>
    <property type="match status" value="1"/>
</dbReference>
<dbReference type="InterPro" id="IPR036188">
    <property type="entry name" value="FAD/NAD-bd_sf"/>
</dbReference>
<dbReference type="InterPro" id="IPR049312">
    <property type="entry name" value="GIDA_C_N"/>
</dbReference>
<dbReference type="InterPro" id="IPR004416">
    <property type="entry name" value="MnmG"/>
</dbReference>
<dbReference type="InterPro" id="IPR002218">
    <property type="entry name" value="MnmG-rel"/>
</dbReference>
<dbReference type="InterPro" id="IPR020595">
    <property type="entry name" value="MnmG-rel_CS"/>
</dbReference>
<dbReference type="InterPro" id="IPR026904">
    <property type="entry name" value="MnmG_C"/>
</dbReference>
<dbReference type="InterPro" id="IPR047001">
    <property type="entry name" value="MnmG_C_subdom"/>
</dbReference>
<dbReference type="InterPro" id="IPR044920">
    <property type="entry name" value="MnmG_C_subdom_sf"/>
</dbReference>
<dbReference type="InterPro" id="IPR040131">
    <property type="entry name" value="MnmG_N"/>
</dbReference>
<dbReference type="NCBIfam" id="TIGR00136">
    <property type="entry name" value="mnmG_gidA"/>
    <property type="match status" value="1"/>
</dbReference>
<dbReference type="PANTHER" id="PTHR11806">
    <property type="entry name" value="GLUCOSE INHIBITED DIVISION PROTEIN A"/>
    <property type="match status" value="1"/>
</dbReference>
<dbReference type="PANTHER" id="PTHR11806:SF0">
    <property type="entry name" value="PROTEIN MTO1 HOMOLOG, MITOCHONDRIAL"/>
    <property type="match status" value="1"/>
</dbReference>
<dbReference type="Pfam" id="PF01134">
    <property type="entry name" value="GIDA"/>
    <property type="match status" value="1"/>
</dbReference>
<dbReference type="Pfam" id="PF21680">
    <property type="entry name" value="GIDA_C_1st"/>
    <property type="match status" value="1"/>
</dbReference>
<dbReference type="Pfam" id="PF13932">
    <property type="entry name" value="SAM_GIDA_C"/>
    <property type="match status" value="1"/>
</dbReference>
<dbReference type="SMART" id="SM01228">
    <property type="entry name" value="GIDA_assoc_3"/>
    <property type="match status" value="1"/>
</dbReference>
<dbReference type="SUPFAM" id="SSF51905">
    <property type="entry name" value="FAD/NAD(P)-binding domain"/>
    <property type="match status" value="1"/>
</dbReference>
<dbReference type="PROSITE" id="PS01280">
    <property type="entry name" value="GIDA_1"/>
    <property type="match status" value="1"/>
</dbReference>
<dbReference type="PROSITE" id="PS01281">
    <property type="entry name" value="GIDA_2"/>
    <property type="match status" value="1"/>
</dbReference>
<reference key="1">
    <citation type="journal article" date="2004" name="PLoS Biol.">
        <title>Phylogenomics of the reproductive parasite Wolbachia pipientis wMel: a streamlined genome overrun by mobile genetic elements.</title>
        <authorList>
            <person name="Wu M."/>
            <person name="Sun L.V."/>
            <person name="Vamathevan J.J."/>
            <person name="Riegler M."/>
            <person name="DeBoy R.T."/>
            <person name="Brownlie J.C."/>
            <person name="McGraw E.A."/>
            <person name="Martin W."/>
            <person name="Esser C."/>
            <person name="Ahmadinejad N."/>
            <person name="Wiegand C."/>
            <person name="Madupu R."/>
            <person name="Beanan M.J."/>
            <person name="Brinkac L.M."/>
            <person name="Daugherty S.C."/>
            <person name="Durkin A.S."/>
            <person name="Kolonay J.F."/>
            <person name="Nelson W.C."/>
            <person name="Mohamoud Y."/>
            <person name="Lee P."/>
            <person name="Berry K.J."/>
            <person name="Young M.B."/>
            <person name="Utterback T.R."/>
            <person name="Weidman J.F."/>
            <person name="Nierman W.C."/>
            <person name="Paulsen I.T."/>
            <person name="Nelson K.E."/>
            <person name="Tettelin H."/>
            <person name="O'Neill S.L."/>
            <person name="Eisen J.A."/>
        </authorList>
    </citation>
    <scope>NUCLEOTIDE SEQUENCE [LARGE SCALE GENOMIC DNA]</scope>
</reference>